<feature type="chain" id="PRO_0000349874" description="Mitochondrial tRNA-specific 2-thiouridylase 1">
    <location>
        <begin position="1"/>
        <end position="416"/>
    </location>
</feature>
<feature type="region of interest" description="Interaction with target base in tRNA" evidence="1">
    <location>
        <begin position="96"/>
        <end position="98"/>
    </location>
</feature>
<feature type="region of interest" description="Interaction with tRNA" evidence="1">
    <location>
        <begin position="171"/>
        <end position="173"/>
    </location>
</feature>
<feature type="region of interest" description="Interaction with tRNA" evidence="1">
    <location>
        <begin position="334"/>
        <end position="335"/>
    </location>
</feature>
<feature type="region of interest" description="Disordered" evidence="4">
    <location>
        <begin position="397"/>
        <end position="416"/>
    </location>
</feature>
<feature type="compositionally biased region" description="Basic and acidic residues" evidence="4">
    <location>
        <begin position="403"/>
        <end position="416"/>
    </location>
</feature>
<feature type="active site" description="Nucleophile" evidence="1">
    <location>
        <position position="101"/>
    </location>
</feature>
<feature type="active site" description="Cysteine persulfide intermediate" evidence="1">
    <location>
        <position position="222"/>
    </location>
</feature>
<feature type="binding site" evidence="1">
    <location>
        <begin position="10"/>
        <end position="17"/>
    </location>
    <ligand>
        <name>ATP</name>
        <dbReference type="ChEBI" id="CHEBI:30616"/>
    </ligand>
</feature>
<feature type="binding site" evidence="1">
    <location>
        <position position="36"/>
    </location>
    <ligand>
        <name>ATP</name>
        <dbReference type="ChEBI" id="CHEBI:30616"/>
    </ligand>
</feature>
<feature type="binding site" evidence="1">
    <location>
        <position position="126"/>
    </location>
    <ligand>
        <name>ATP</name>
        <dbReference type="ChEBI" id="CHEBI:30616"/>
    </ligand>
</feature>
<feature type="site" description="Interaction with tRNA" evidence="1">
    <location>
        <position position="127"/>
    </location>
</feature>
<feature type="site" description="Interaction with tRNA" evidence="1">
    <location>
        <position position="267"/>
    </location>
</feature>
<feature type="site" description="Interaction with tRNA" evidence="1">
    <location>
        <position position="367"/>
    </location>
</feature>
<feature type="disulfide bond" description="Alternate" evidence="1">
    <location>
        <begin position="101"/>
        <end position="222"/>
    </location>
</feature>
<accession>Q503J2</accession>
<proteinExistence type="evidence at transcript level"/>
<name>MTU1_DANRE</name>
<reference key="1">
    <citation type="submission" date="2005-05" db="EMBL/GenBank/DDBJ databases">
        <authorList>
            <consortium name="NIH - Zebrafish Gene Collection (ZGC) project"/>
        </authorList>
    </citation>
    <scope>NUCLEOTIDE SEQUENCE [LARGE SCALE MRNA]</scope>
    <source>
        <tissue>Embryo</tissue>
    </source>
</reference>
<comment type="function">
    <text evidence="2">Catalyzes the 2-thiolation of uridine at the wobble position (U34) of mitochondrial tRNA(Lys), tRNA(Glu) and tRNA(Gln). Required for the formation of 5-taurinomethyl-2-thiouridine (tm5s2U) of mitochondrial tRNA(Lys), tRNA(Glu), and tRNA(Gln) at the wobble position. ATP is required to activate the C2 atom of the wobble base.</text>
</comment>
<comment type="catalytic activity">
    <reaction evidence="3">
        <text>5-taurinomethyluridine(34) in tRNA + S-sulfanyl-L-cysteinyl-[protein] + AH2 + ATP = 5-taurinomethyl-2-thiouridine(34) in tRNA + L-cysteinyl-[protein] + A + AMP + diphosphate + H(+)</text>
        <dbReference type="Rhea" id="RHEA:47040"/>
        <dbReference type="Rhea" id="RHEA-COMP:10131"/>
        <dbReference type="Rhea" id="RHEA-COMP:11726"/>
        <dbReference type="Rhea" id="RHEA-COMP:11732"/>
        <dbReference type="Rhea" id="RHEA-COMP:11733"/>
        <dbReference type="ChEBI" id="CHEBI:13193"/>
        <dbReference type="ChEBI" id="CHEBI:15378"/>
        <dbReference type="ChEBI" id="CHEBI:17499"/>
        <dbReference type="ChEBI" id="CHEBI:29950"/>
        <dbReference type="ChEBI" id="CHEBI:30616"/>
        <dbReference type="ChEBI" id="CHEBI:33019"/>
        <dbReference type="ChEBI" id="CHEBI:61963"/>
        <dbReference type="ChEBI" id="CHEBI:87171"/>
        <dbReference type="ChEBI" id="CHEBI:87172"/>
        <dbReference type="ChEBI" id="CHEBI:456215"/>
        <dbReference type="EC" id="2.8.1.14"/>
    </reaction>
</comment>
<comment type="subcellular location">
    <subcellularLocation>
        <location evidence="1">Mitochondrion</location>
    </subcellularLocation>
</comment>
<comment type="miscellaneous">
    <text evidence="1">During the reaction, ATP is used to activate the C2 atom of U34 by adenylation. After this, the persulfide sulfur on the catalytic cysteine is transferred to the C2 atom of the wobble base (U34) of mitochondrial tRNA(Lys), tRNA(Glu) and tRNA(Gln). The reaction probably involves hydrogen sulfide that is generated from the persulfide intermediate and that acts as a nucleophile towards the activated C2 atom on U34. Subsequently, a transient disulfide bond is formed between the two active site cysteine residues (By similarity).</text>
</comment>
<comment type="similarity">
    <text evidence="5">Belongs to the MnmA/TRMU family.</text>
</comment>
<sequence length="416" mass="47564">MGVLRHVVCAMSGGVDSSVSALLLKRMGYHVTGVFMKNWDSQEEKGLCSSDRDCEDAYKVCKMLDIPFHEVSYVKEYWHEVFSNLLWEYERGRTPNPDIICNKHIKFKHFYQYAVNTLGADAMATGHYARTSQEDEEVFQQKLTEAPKSLFRDRFEIRKPVRLYQGADLLKDQTFFLSQISQDALRHTLFPLAGLTKGYVKKIAAEAGFQHVLKKKESMGICFIGKRDFENFILEYLEPRPGNFVSIEDGQIMGKHKGWFTLTLGQRARIGGRADAWFVVDKDVTTADVFVCPSTFHPALFRDTLQTDRFHWIAEEPPAELVHTQMMDCHFCFNNRMPLTPCTVTLNLDGSVWVMVKEPMRGMATGQFAVLYKGHECLGSGKIIRLGPTKFALQKDQSNTNCLHKDTNQQHPEPHS</sequence>
<gene>
    <name type="primary">trmu</name>
    <name type="synonym">mtu1</name>
    <name type="ORF">zgc:110555</name>
</gene>
<evidence type="ECO:0000250" key="1"/>
<evidence type="ECO:0000250" key="2">
    <source>
        <dbReference type="UniProtKB" id="O75648"/>
    </source>
</evidence>
<evidence type="ECO:0000250" key="3">
    <source>
        <dbReference type="UniProtKB" id="Q12093"/>
    </source>
</evidence>
<evidence type="ECO:0000256" key="4">
    <source>
        <dbReference type="SAM" id="MobiDB-lite"/>
    </source>
</evidence>
<evidence type="ECO:0000305" key="5"/>
<protein>
    <recommendedName>
        <fullName>Mitochondrial tRNA-specific 2-thiouridylase 1</fullName>
        <ecNumber evidence="3">2.8.1.14</ecNumber>
    </recommendedName>
</protein>
<dbReference type="EC" id="2.8.1.14" evidence="3"/>
<dbReference type="EMBL" id="BC095308">
    <property type="protein sequence ID" value="AAH95308.1"/>
    <property type="molecule type" value="mRNA"/>
</dbReference>
<dbReference type="RefSeq" id="NP_001018435.1">
    <property type="nucleotide sequence ID" value="NM_001020599.1"/>
</dbReference>
<dbReference type="SMR" id="Q503J2"/>
<dbReference type="FunCoup" id="Q503J2">
    <property type="interactions" value="684"/>
</dbReference>
<dbReference type="STRING" id="7955.ENSDARP00000064218"/>
<dbReference type="PaxDb" id="7955-ENSDARP00000064218"/>
<dbReference type="GeneID" id="553625"/>
<dbReference type="KEGG" id="dre:553625"/>
<dbReference type="AGR" id="ZFIN:ZDB-GENE-050522-540"/>
<dbReference type="CTD" id="55687"/>
<dbReference type="ZFIN" id="ZDB-GENE-050522-540">
    <property type="gene designation" value="trmu"/>
</dbReference>
<dbReference type="eggNOG" id="KOG2805">
    <property type="taxonomic scope" value="Eukaryota"/>
</dbReference>
<dbReference type="InParanoid" id="Q503J2"/>
<dbReference type="OrthoDB" id="3685at2759"/>
<dbReference type="PhylomeDB" id="Q503J2"/>
<dbReference type="PRO" id="PR:Q503J2"/>
<dbReference type="Proteomes" id="UP000000437">
    <property type="component" value="Chromosome 4"/>
</dbReference>
<dbReference type="GO" id="GO:0005739">
    <property type="term" value="C:mitochondrion"/>
    <property type="evidence" value="ECO:0000318"/>
    <property type="project" value="GO_Central"/>
</dbReference>
<dbReference type="GO" id="GO:0005524">
    <property type="term" value="F:ATP binding"/>
    <property type="evidence" value="ECO:0007669"/>
    <property type="project" value="UniProtKB-KW"/>
</dbReference>
<dbReference type="GO" id="GO:0000049">
    <property type="term" value="F:tRNA binding"/>
    <property type="evidence" value="ECO:0007669"/>
    <property type="project" value="UniProtKB-KW"/>
</dbReference>
<dbReference type="GO" id="GO:0061708">
    <property type="term" value="F:tRNA-5-taurinomethyluridine 2-sulfurtransferase"/>
    <property type="evidence" value="ECO:0007669"/>
    <property type="project" value="UniProtKB-EC"/>
</dbReference>
<dbReference type="GO" id="GO:0070903">
    <property type="term" value="P:mitochondrial tRNA thio-modification"/>
    <property type="evidence" value="ECO:0000315"/>
    <property type="project" value="ZFIN"/>
</dbReference>
<dbReference type="GO" id="GO:0002143">
    <property type="term" value="P:tRNA wobble position uridine thiolation"/>
    <property type="evidence" value="ECO:0000318"/>
    <property type="project" value="GO_Central"/>
</dbReference>
<dbReference type="CDD" id="cd01998">
    <property type="entry name" value="MnmA_TRMU-like"/>
    <property type="match status" value="1"/>
</dbReference>
<dbReference type="FunFam" id="3.40.50.620:FF:000104">
    <property type="entry name" value="Mitochondrial tRNA-specific 2-thiouridylase 1"/>
    <property type="match status" value="1"/>
</dbReference>
<dbReference type="FunFam" id="2.30.30.280:FF:000001">
    <property type="entry name" value="tRNA-specific 2-thiouridylase MnmA"/>
    <property type="match status" value="1"/>
</dbReference>
<dbReference type="Gene3D" id="2.30.30.280">
    <property type="entry name" value="Adenine nucleotide alpha hydrolases-like domains"/>
    <property type="match status" value="1"/>
</dbReference>
<dbReference type="Gene3D" id="3.40.50.620">
    <property type="entry name" value="HUPs"/>
    <property type="match status" value="1"/>
</dbReference>
<dbReference type="Gene3D" id="2.40.30.10">
    <property type="entry name" value="Translation factors"/>
    <property type="match status" value="1"/>
</dbReference>
<dbReference type="HAMAP" id="MF_00144">
    <property type="entry name" value="tRNA_thiouridyl_MnmA"/>
    <property type="match status" value="1"/>
</dbReference>
<dbReference type="InterPro" id="IPR004506">
    <property type="entry name" value="MnmA-like"/>
</dbReference>
<dbReference type="InterPro" id="IPR046885">
    <property type="entry name" value="MnmA-like_C"/>
</dbReference>
<dbReference type="InterPro" id="IPR046884">
    <property type="entry name" value="MnmA-like_central"/>
</dbReference>
<dbReference type="InterPro" id="IPR023382">
    <property type="entry name" value="MnmA-like_central_sf"/>
</dbReference>
<dbReference type="InterPro" id="IPR014729">
    <property type="entry name" value="Rossmann-like_a/b/a_fold"/>
</dbReference>
<dbReference type="NCBIfam" id="NF001138">
    <property type="entry name" value="PRK00143.1"/>
    <property type="match status" value="1"/>
</dbReference>
<dbReference type="NCBIfam" id="TIGR00420">
    <property type="entry name" value="trmU"/>
    <property type="match status" value="1"/>
</dbReference>
<dbReference type="PANTHER" id="PTHR11933:SF5">
    <property type="entry name" value="MITOCHONDRIAL TRNA-SPECIFIC 2-THIOURIDYLASE 1"/>
    <property type="match status" value="1"/>
</dbReference>
<dbReference type="PANTHER" id="PTHR11933">
    <property type="entry name" value="TRNA 5-METHYLAMINOMETHYL-2-THIOURIDYLATE -METHYLTRANSFERASE"/>
    <property type="match status" value="1"/>
</dbReference>
<dbReference type="Pfam" id="PF03054">
    <property type="entry name" value="tRNA_Me_trans"/>
    <property type="match status" value="1"/>
</dbReference>
<dbReference type="Pfam" id="PF20258">
    <property type="entry name" value="tRNA_Me_trans_C"/>
    <property type="match status" value="1"/>
</dbReference>
<dbReference type="Pfam" id="PF20259">
    <property type="entry name" value="tRNA_Me_trans_M"/>
    <property type="match status" value="1"/>
</dbReference>
<dbReference type="SUPFAM" id="SSF52402">
    <property type="entry name" value="Adenine nucleotide alpha hydrolases-like"/>
    <property type="match status" value="1"/>
</dbReference>
<keyword id="KW-0067">ATP-binding</keyword>
<keyword id="KW-1015">Disulfide bond</keyword>
<keyword id="KW-0496">Mitochondrion</keyword>
<keyword id="KW-0547">Nucleotide-binding</keyword>
<keyword id="KW-1185">Reference proteome</keyword>
<keyword id="KW-0694">RNA-binding</keyword>
<keyword id="KW-0808">Transferase</keyword>
<keyword id="KW-0819">tRNA processing</keyword>
<keyword id="KW-0820">tRNA-binding</keyword>
<organism>
    <name type="scientific">Danio rerio</name>
    <name type="common">Zebrafish</name>
    <name type="synonym">Brachydanio rerio</name>
    <dbReference type="NCBI Taxonomy" id="7955"/>
    <lineage>
        <taxon>Eukaryota</taxon>
        <taxon>Metazoa</taxon>
        <taxon>Chordata</taxon>
        <taxon>Craniata</taxon>
        <taxon>Vertebrata</taxon>
        <taxon>Euteleostomi</taxon>
        <taxon>Actinopterygii</taxon>
        <taxon>Neopterygii</taxon>
        <taxon>Teleostei</taxon>
        <taxon>Ostariophysi</taxon>
        <taxon>Cypriniformes</taxon>
        <taxon>Danionidae</taxon>
        <taxon>Danioninae</taxon>
        <taxon>Danio</taxon>
    </lineage>
</organism>